<protein>
    <recommendedName>
        <fullName evidence="1">2,3,4,5-tetrahydropyridine-2,6-dicarboxylate N-succinyltransferase</fullName>
        <ecNumber evidence="1">2.3.1.117</ecNumber>
    </recommendedName>
    <alternativeName>
        <fullName evidence="1">Tetrahydrodipicolinate N-succinyltransferase</fullName>
        <shortName evidence="1">THDP succinyltransferase</shortName>
        <shortName evidence="1">THP succinyltransferase</shortName>
    </alternativeName>
    <alternativeName>
        <fullName evidence="1">Tetrahydropicolinate succinylase</fullName>
    </alternativeName>
</protein>
<name>DAPD_SALTO</name>
<accession>A4XB85</accession>
<dbReference type="EC" id="2.3.1.117" evidence="1"/>
<dbReference type="EMBL" id="CP000667">
    <property type="protein sequence ID" value="ABP56184.1"/>
    <property type="molecule type" value="Genomic_DNA"/>
</dbReference>
<dbReference type="RefSeq" id="WP_012014959.1">
    <property type="nucleotide sequence ID" value="NC_009380.1"/>
</dbReference>
<dbReference type="SMR" id="A4XB85"/>
<dbReference type="STRING" id="369723.Strop_3753"/>
<dbReference type="KEGG" id="stp:Strop_3753"/>
<dbReference type="PATRIC" id="fig|369723.5.peg.3870"/>
<dbReference type="eggNOG" id="COG2171">
    <property type="taxonomic scope" value="Bacteria"/>
</dbReference>
<dbReference type="HOGENOM" id="CLU_057490_1_0_11"/>
<dbReference type="UniPathway" id="UPA00034">
    <property type="reaction ID" value="UER00019"/>
</dbReference>
<dbReference type="Proteomes" id="UP000000235">
    <property type="component" value="Chromosome"/>
</dbReference>
<dbReference type="GO" id="GO:0005737">
    <property type="term" value="C:cytoplasm"/>
    <property type="evidence" value="ECO:0007669"/>
    <property type="project" value="UniProtKB-SubCell"/>
</dbReference>
<dbReference type="GO" id="GO:0008666">
    <property type="term" value="F:2,3,4,5-tetrahydropyridine-2,6-dicarboxylate N-succinyltransferase activity"/>
    <property type="evidence" value="ECO:0007669"/>
    <property type="project" value="UniProtKB-UniRule"/>
</dbReference>
<dbReference type="GO" id="GO:0000287">
    <property type="term" value="F:magnesium ion binding"/>
    <property type="evidence" value="ECO:0007669"/>
    <property type="project" value="UniProtKB-UniRule"/>
</dbReference>
<dbReference type="GO" id="GO:0019877">
    <property type="term" value="P:diaminopimelate biosynthetic process"/>
    <property type="evidence" value="ECO:0007669"/>
    <property type="project" value="UniProtKB-UniRule"/>
</dbReference>
<dbReference type="GO" id="GO:0009089">
    <property type="term" value="P:lysine biosynthetic process via diaminopimelate"/>
    <property type="evidence" value="ECO:0007669"/>
    <property type="project" value="UniProtKB-UniRule"/>
</dbReference>
<dbReference type="CDD" id="cd04649">
    <property type="entry name" value="LbH_THP_succinylT_putative"/>
    <property type="match status" value="1"/>
</dbReference>
<dbReference type="Gene3D" id="3.30.70.2010">
    <property type="match status" value="1"/>
</dbReference>
<dbReference type="Gene3D" id="2.160.10.10">
    <property type="entry name" value="Hexapeptide repeat proteins"/>
    <property type="match status" value="1"/>
</dbReference>
<dbReference type="Gene3D" id="3.30.60.70">
    <property type="entry name" value="Trimeric LpxA-like enzymes"/>
    <property type="match status" value="1"/>
</dbReference>
<dbReference type="HAMAP" id="MF_02122">
    <property type="entry name" value="DapD_type2"/>
    <property type="match status" value="1"/>
</dbReference>
<dbReference type="InterPro" id="IPR019875">
    <property type="entry name" value="DapD_actinobacteria"/>
</dbReference>
<dbReference type="InterPro" id="IPR001451">
    <property type="entry name" value="Hexapep"/>
</dbReference>
<dbReference type="InterPro" id="IPR032784">
    <property type="entry name" value="THDPS_M"/>
</dbReference>
<dbReference type="InterPro" id="IPR038361">
    <property type="entry name" value="THDPS_M_sf"/>
</dbReference>
<dbReference type="InterPro" id="IPR011004">
    <property type="entry name" value="Trimer_LpxA-like_sf"/>
</dbReference>
<dbReference type="InterPro" id="IPR026586">
    <property type="entry name" value="Type2_DapD"/>
</dbReference>
<dbReference type="NCBIfam" id="TIGR03535">
    <property type="entry name" value="DapD_actino"/>
    <property type="match status" value="1"/>
</dbReference>
<dbReference type="Pfam" id="PF14602">
    <property type="entry name" value="Hexapep_2"/>
    <property type="match status" value="1"/>
</dbReference>
<dbReference type="Pfam" id="PF14789">
    <property type="entry name" value="THDPS_M"/>
    <property type="match status" value="1"/>
</dbReference>
<dbReference type="SUPFAM" id="SSF51161">
    <property type="entry name" value="Trimeric LpxA-like enzymes"/>
    <property type="match status" value="1"/>
</dbReference>
<organism>
    <name type="scientific">Salinispora tropica (strain ATCC BAA-916 / DSM 44818 / JCM 13857 / NBRC 105044 / CNB-440)</name>
    <dbReference type="NCBI Taxonomy" id="369723"/>
    <lineage>
        <taxon>Bacteria</taxon>
        <taxon>Bacillati</taxon>
        <taxon>Actinomycetota</taxon>
        <taxon>Actinomycetes</taxon>
        <taxon>Micromonosporales</taxon>
        <taxon>Micromonosporaceae</taxon>
        <taxon>Salinispora</taxon>
    </lineage>
</organism>
<reference key="1">
    <citation type="journal article" date="2007" name="Proc. Natl. Acad. Sci. U.S.A.">
        <title>Genome sequencing reveals complex secondary metabolome in the marine actinomycete Salinispora tropica.</title>
        <authorList>
            <person name="Udwary D.W."/>
            <person name="Zeigler L."/>
            <person name="Asolkar R.N."/>
            <person name="Singan V."/>
            <person name="Lapidus A."/>
            <person name="Fenical W."/>
            <person name="Jensen P.R."/>
            <person name="Moore B.S."/>
        </authorList>
    </citation>
    <scope>NUCLEOTIDE SEQUENCE [LARGE SCALE GENOMIC DNA]</scope>
    <source>
        <strain>ATCC BAA-916 / DSM 44818 / JCM 13857 / NBRC 105044 / CNB-440</strain>
    </source>
</reference>
<keyword id="KW-0012">Acyltransferase</keyword>
<keyword id="KW-0028">Amino-acid biosynthesis</keyword>
<keyword id="KW-0963">Cytoplasm</keyword>
<keyword id="KW-0220">Diaminopimelate biosynthesis</keyword>
<keyword id="KW-0457">Lysine biosynthesis</keyword>
<keyword id="KW-0460">Magnesium</keyword>
<keyword id="KW-0479">Metal-binding</keyword>
<keyword id="KW-1185">Reference proteome</keyword>
<keyword id="KW-0808">Transferase</keyword>
<gene>
    <name evidence="1" type="primary">dapD</name>
    <name type="ordered locus">Strop_3753</name>
</gene>
<sequence length="319" mass="33119">MTTAQSAWGIGLATVTADDQVLDTWYPTGKLGLGELPLVPGEDEADVLDLPPGAVGDRALPGLRTVQLVTVLSSLADPIKDAADAYLRLHLLSHRLVRPNELNLDGIFGKLANVAWTSAGPCPPERVDELRVIERAAGRHLTIYGVDKFPRMTDYVVPSGVRIADADRVRIGAHLASGTTVMHEGFVNFNAGTLGASMVEGRIVQGVVIGDGSDIGGGASIMGTLSGGGTEKVRVGERSLIGANAGVGISLGDDCVVEAGCYITASSKLTLPDGRVVKARELSGVDGLLFWRNSVTGGLEAKPRSGQGIALNAALHAND</sequence>
<evidence type="ECO:0000255" key="1">
    <source>
        <dbReference type="HAMAP-Rule" id="MF_02122"/>
    </source>
</evidence>
<comment type="function">
    <text evidence="1">Catalyzes the conversion of the cyclic tetrahydrodipicolinate (THDP) into the acyclic N-succinyl-L-2-amino-6-oxopimelate using succinyl-CoA.</text>
</comment>
<comment type="catalytic activity">
    <reaction evidence="1">
        <text>(S)-2,3,4,5-tetrahydrodipicolinate + succinyl-CoA + H2O = (S)-2-succinylamino-6-oxoheptanedioate + CoA</text>
        <dbReference type="Rhea" id="RHEA:17325"/>
        <dbReference type="ChEBI" id="CHEBI:15377"/>
        <dbReference type="ChEBI" id="CHEBI:15685"/>
        <dbReference type="ChEBI" id="CHEBI:16845"/>
        <dbReference type="ChEBI" id="CHEBI:57287"/>
        <dbReference type="ChEBI" id="CHEBI:57292"/>
        <dbReference type="EC" id="2.3.1.117"/>
    </reaction>
</comment>
<comment type="pathway">
    <text evidence="1">Amino-acid biosynthesis; L-lysine biosynthesis via DAP pathway; LL-2,6-diaminopimelate from (S)-tetrahydrodipicolinate (succinylase route): step 1/3.</text>
</comment>
<comment type="subunit">
    <text evidence="1">Homotrimer.</text>
</comment>
<comment type="subcellular location">
    <subcellularLocation>
        <location evidence="1">Cytoplasm</location>
    </subcellularLocation>
</comment>
<comment type="similarity">
    <text evidence="1">Belongs to the type 2 tetrahydrodipicolinate N-succinyltransferase family.</text>
</comment>
<feature type="chain" id="PRO_0000412268" description="2,3,4,5-tetrahydropyridine-2,6-dicarboxylate N-succinyltransferase">
    <location>
        <begin position="1"/>
        <end position="319"/>
    </location>
</feature>
<feature type="active site" description="Acyl-anhydride intermediate" evidence="1">
    <location>
        <position position="200"/>
    </location>
</feature>
<feature type="binding site" evidence="1">
    <location>
        <position position="167"/>
    </location>
    <ligand>
        <name>Mg(2+)</name>
        <dbReference type="ChEBI" id="CHEBI:18420"/>
        <label>1</label>
        <note>ligand shared between trimeric partners</note>
    </ligand>
</feature>
<feature type="binding site" evidence="1">
    <location>
        <position position="184"/>
    </location>
    <ligand>
        <name>Mg(2+)</name>
        <dbReference type="ChEBI" id="CHEBI:18420"/>
        <label>2</label>
        <note>ligand shared between trimeric partners</note>
    </ligand>
</feature>
<feature type="binding site" evidence="1">
    <location>
        <position position="202"/>
    </location>
    <ligand>
        <name>succinyl-CoA</name>
        <dbReference type="ChEBI" id="CHEBI:57292"/>
    </ligand>
</feature>
<feature type="binding site" evidence="1">
    <location>
        <position position="217"/>
    </location>
    <ligand>
        <name>succinyl-CoA</name>
        <dbReference type="ChEBI" id="CHEBI:57292"/>
    </ligand>
</feature>
<feature type="binding site" evidence="1">
    <location>
        <position position="220"/>
    </location>
    <ligand>
        <name>succinyl-CoA</name>
        <dbReference type="ChEBI" id="CHEBI:57292"/>
    </ligand>
</feature>
<feature type="binding site" evidence="1">
    <location>
        <position position="243"/>
    </location>
    <ligand>
        <name>succinyl-CoA</name>
        <dbReference type="ChEBI" id="CHEBI:57292"/>
    </ligand>
</feature>
<feature type="binding site" evidence="1">
    <location>
        <begin position="258"/>
        <end position="259"/>
    </location>
    <ligand>
        <name>succinyl-CoA</name>
        <dbReference type="ChEBI" id="CHEBI:57292"/>
    </ligand>
</feature>
<feature type="binding site" evidence="1">
    <location>
        <position position="278"/>
    </location>
    <ligand>
        <name>succinyl-CoA</name>
        <dbReference type="ChEBI" id="CHEBI:57292"/>
    </ligand>
</feature>
<proteinExistence type="inferred from homology"/>